<proteinExistence type="inferred from homology"/>
<keyword id="KW-0025">Alternative splicing</keyword>
<keyword id="KW-1262">Eukaryotic host gene expression shutoff by virus</keyword>
<keyword id="KW-1035">Host cytoplasm</keyword>
<keyword id="KW-1190">Host gene expression shutoff by virus</keyword>
<keyword id="KW-1192">Host mRNA suppression by virus</keyword>
<keyword id="KW-1048">Host nucleus</keyword>
<keyword id="KW-0945">Host-virus interaction</keyword>
<keyword id="KW-1090">Inhibition of host innate immune response by virus</keyword>
<keyword id="KW-1114">Inhibition of host interferon signaling pathway by virus</keyword>
<keyword id="KW-1102">Inhibition of host PKR by virus</keyword>
<keyword id="KW-1103">Inhibition of host pre-mRNA processing by virus</keyword>
<keyword id="KW-1088">Inhibition of host RIG-I by virus</keyword>
<keyword id="KW-1113">Inhibition of host RLR pathway by virus</keyword>
<keyword id="KW-0922">Interferon antiviral system evasion</keyword>
<keyword id="KW-0694">RNA-binding</keyword>
<keyword id="KW-0832">Ubl conjugation</keyword>
<keyword id="KW-0899">Viral immunoevasion</keyword>
<gene>
    <name evidence="1" type="primary">NS</name>
</gene>
<organism>
    <name type="scientific">Influenza A virus (strain A/Turkey/Minnesota/833/1980 H4N2)</name>
    <dbReference type="NCBI Taxonomy" id="383603"/>
    <lineage>
        <taxon>Viruses</taxon>
        <taxon>Riboviria</taxon>
        <taxon>Orthornavirae</taxon>
        <taxon>Negarnaviricota</taxon>
        <taxon>Polyploviricotina</taxon>
        <taxon>Insthoviricetes</taxon>
        <taxon>Articulavirales</taxon>
        <taxon>Orthomyxoviridae</taxon>
        <taxon>Alphainfluenzavirus</taxon>
        <taxon>Alphainfluenzavirus influenzae</taxon>
        <taxon>Influenza A virus</taxon>
    </lineage>
</organism>
<name>NS1_I80A8</name>
<dbReference type="EMBL" id="CY005910">
    <property type="protein sequence ID" value="ABB21824.1"/>
    <property type="molecule type" value="Genomic_RNA"/>
</dbReference>
<dbReference type="SMR" id="Q20NN7"/>
<dbReference type="Proteomes" id="UP000008579">
    <property type="component" value="Genome"/>
</dbReference>
<dbReference type="GO" id="GO:0030430">
    <property type="term" value="C:host cell cytoplasm"/>
    <property type="evidence" value="ECO:0007669"/>
    <property type="project" value="UniProtKB-SubCell"/>
</dbReference>
<dbReference type="GO" id="GO:0042025">
    <property type="term" value="C:host cell nucleus"/>
    <property type="evidence" value="ECO:0007669"/>
    <property type="project" value="UniProtKB-SubCell"/>
</dbReference>
<dbReference type="GO" id="GO:0030291">
    <property type="term" value="F:protein serine/threonine kinase inhibitor activity"/>
    <property type="evidence" value="ECO:0007669"/>
    <property type="project" value="UniProtKB-KW"/>
</dbReference>
<dbReference type="GO" id="GO:0003723">
    <property type="term" value="F:RNA binding"/>
    <property type="evidence" value="ECO:0007669"/>
    <property type="project" value="UniProtKB-KW"/>
</dbReference>
<dbReference type="GO" id="GO:0039540">
    <property type="term" value="P:symbiont-mediated suppression of host cytoplasmic pattern recognition receptor signaling pathway via inhibition of RIG-I activity"/>
    <property type="evidence" value="ECO:0007669"/>
    <property type="project" value="UniProtKB-KW"/>
</dbReference>
<dbReference type="GO" id="GO:0039657">
    <property type="term" value="P:symbiont-mediated suppression of host gene expression"/>
    <property type="evidence" value="ECO:0007669"/>
    <property type="project" value="UniProtKB-KW"/>
</dbReference>
<dbReference type="GO" id="GO:0039524">
    <property type="term" value="P:symbiont-mediated suppression of host mRNA processing"/>
    <property type="evidence" value="ECO:0007669"/>
    <property type="project" value="UniProtKB-KW"/>
</dbReference>
<dbReference type="GO" id="GO:0039580">
    <property type="term" value="P:symbiont-mediated suppression of host PKR/eIFalpha signaling"/>
    <property type="evidence" value="ECO:0007669"/>
    <property type="project" value="UniProtKB-KW"/>
</dbReference>
<dbReference type="GO" id="GO:0039502">
    <property type="term" value="P:symbiont-mediated suppression of host type I interferon-mediated signaling pathway"/>
    <property type="evidence" value="ECO:0007669"/>
    <property type="project" value="UniProtKB-KW"/>
</dbReference>
<dbReference type="FunFam" id="1.10.287.10:FF:000001">
    <property type="entry name" value="Non-structural protein 1"/>
    <property type="match status" value="1"/>
</dbReference>
<dbReference type="FunFam" id="3.30.420.330:FF:000001">
    <property type="entry name" value="Non-structural protein 1"/>
    <property type="match status" value="1"/>
</dbReference>
<dbReference type="Gene3D" id="3.30.420.330">
    <property type="entry name" value="Influenza virus non-structural protein, effector domain"/>
    <property type="match status" value="1"/>
</dbReference>
<dbReference type="Gene3D" id="1.10.287.10">
    <property type="entry name" value="S15/NS1, RNA-binding"/>
    <property type="match status" value="1"/>
</dbReference>
<dbReference type="HAMAP" id="MF_04066">
    <property type="entry name" value="INFV_NS1"/>
    <property type="match status" value="1"/>
</dbReference>
<dbReference type="InterPro" id="IPR004208">
    <property type="entry name" value="NS1"/>
</dbReference>
<dbReference type="InterPro" id="IPR000256">
    <property type="entry name" value="NS1A"/>
</dbReference>
<dbReference type="InterPro" id="IPR038064">
    <property type="entry name" value="NS1A_effect_dom-like_sf"/>
</dbReference>
<dbReference type="InterPro" id="IPR009068">
    <property type="entry name" value="uS15_NS1_RNA-bd_sf"/>
</dbReference>
<dbReference type="Pfam" id="PF00600">
    <property type="entry name" value="Flu_NS1"/>
    <property type="match status" value="1"/>
</dbReference>
<dbReference type="SUPFAM" id="SSF143021">
    <property type="entry name" value="Ns1 effector domain-like"/>
    <property type="match status" value="1"/>
</dbReference>
<dbReference type="SUPFAM" id="SSF47060">
    <property type="entry name" value="S15/NS1 RNA-binding domain"/>
    <property type="match status" value="1"/>
</dbReference>
<organismHost>
    <name type="scientific">Aves</name>
    <dbReference type="NCBI Taxonomy" id="8782"/>
</organismHost>
<evidence type="ECO:0000255" key="1">
    <source>
        <dbReference type="HAMAP-Rule" id="MF_04066"/>
    </source>
</evidence>
<evidence type="ECO:0000256" key="2">
    <source>
        <dbReference type="SAM" id="MobiDB-lite"/>
    </source>
</evidence>
<reference key="1">
    <citation type="journal article" date="2006" name="Science">
        <title>Large-scale sequence analysis of avian influenza isolates.</title>
        <authorList>
            <person name="Obenauer J.C."/>
            <person name="Denson J."/>
            <person name="Mehta P.K."/>
            <person name="Su X."/>
            <person name="Mukatira S."/>
            <person name="Finkelstein D.B."/>
            <person name="Xu X."/>
            <person name="Wang J."/>
            <person name="Ma J."/>
            <person name="Fan Y."/>
            <person name="Rakestraw K.M."/>
            <person name="Webster R.G."/>
            <person name="Hoffmann E."/>
            <person name="Krauss S."/>
            <person name="Zheng J."/>
            <person name="Zhang Z."/>
            <person name="Naeve C.W."/>
        </authorList>
    </citation>
    <scope>NUCLEOTIDE SEQUENCE [GENOMIC RNA]</scope>
</reference>
<protein>
    <recommendedName>
        <fullName evidence="1">Non-structural protein 1</fullName>
        <shortName evidence="1">NS1</shortName>
    </recommendedName>
    <alternativeName>
        <fullName evidence="1">NS1A</fullName>
    </alternativeName>
</protein>
<accession>Q20NN7</accession>
<sequence length="230" mass="26083">MDSNTVSSFQVDCFLWHVRKRFADQELGDAPFLDRLRRDQKSLRGRGSTLGLDIETATRAGKQIVERILEEESDEALKMTIASVPASRYLTDMTLEEMSRDWFMLMPKQKVAGSLCIRMDQAIMDKNIILKANFSVIFDRLETLILLRAFTEEGAIVGEISPLPSLPGHTDEDVKNAIGVLIGGLEWNDNTVRVSETLQRFAWRSSNEDGRPPLPPKQKRKMARTIESEV</sequence>
<feature type="chain" id="PRO_0000324269" description="Non-structural protein 1">
    <location>
        <begin position="1"/>
        <end position="230"/>
    </location>
</feature>
<feature type="region of interest" description="RNA-binding and homodimerization" evidence="1">
    <location>
        <begin position="1"/>
        <end position="73"/>
    </location>
</feature>
<feature type="region of interest" description="CPSF4-binding" evidence="1">
    <location>
        <begin position="180"/>
        <end position="215"/>
    </location>
</feature>
<feature type="region of interest" description="Disordered" evidence="2">
    <location>
        <begin position="205"/>
        <end position="230"/>
    </location>
</feature>
<feature type="region of interest" description="PABPN1-binding" evidence="1">
    <location>
        <begin position="223"/>
        <end position="230"/>
    </location>
</feature>
<feature type="short sequence motif" description="Nuclear localization signal" evidence="1">
    <location>
        <begin position="34"/>
        <end position="38"/>
    </location>
</feature>
<feature type="short sequence motif" description="Nuclear export signal" evidence="1">
    <location>
        <begin position="137"/>
        <end position="146"/>
    </location>
</feature>
<comment type="function">
    <text evidence="1">Inhibits post-transcriptional processing of cellular pre-mRNA, by binding and inhibiting two cellular proteins that are required for the 3'-end processing of cellular pre-mRNAs: the 30 kDa cleavage and polyadenylation specificity factor/CPSF4 and the poly(A)-binding protein 2/PABPN1. In turn, unprocessed 3' end pre-mRNAs accumulate in the host nucleus and are no longer exported to the cytoplasm. Cellular protein synthesis is thereby shut off very early after virus infection. Viral protein synthesis is not affected by the inhibition of the cellular 3' end processing machinery because the poly(A) tails of viral mRNAs are produced by the viral polymerase through a stuttering mechanism. Prevents the establishment of the cellular antiviral state by inhibiting TRIM25-mediated RIGI ubiquitination, which normally triggers the antiviral transduction signal that leads to the activation of type I IFN genes by transcription factors IRF3 and IRF7. Also binds poly(A) and U6 snRNA. Inhibits the integrated stress response (ISR) in the infected cell by blocking dsRNA binding by EIF2AK2/PKR and further phosphorylation of EIF2S1/EIF-2ALPHA. Stress granule formation is thus inhibited, which allows protein synthesis and viral replication.</text>
</comment>
<comment type="subunit">
    <text evidence="1">Homodimer. Interacts with host TRIM25 (via coiled coil); this interaction specifically inhibits TRIM25 multimerization and TRIM25-mediated RIGI CARD ubiquitination. Interacts with human EIF2AK2/PKR, CPSF4, IVNS1ABP and PABPN1.</text>
</comment>
<comment type="subcellular location">
    <subcellularLocation>
        <location evidence="1">Host nucleus</location>
    </subcellularLocation>
    <subcellularLocation>
        <location evidence="1">Host cytoplasm</location>
    </subcellularLocation>
    <text evidence="1">In uninfected, transfected cells, NS1 is localized in the nucleus. Only in virus infected cells, the nuclear export signal is unveiled, presumably by a viral protein, and a fraction of NS1 is exported in the cytoplasm.</text>
</comment>
<comment type="alternative products">
    <event type="alternative splicing"/>
    <isoform>
        <id>Q20NN7-1</id>
        <name>NS1</name>
        <sequence type="displayed"/>
    </isoform>
    <isoform>
        <id>Q20NN8-1</id>
        <name>NEP</name>
        <name>NS2</name>
        <sequence type="external"/>
    </isoform>
</comment>
<comment type="domain">
    <text evidence="1">The dsRNA-binding region is required for suppression of RNA silencing.</text>
</comment>
<comment type="PTM">
    <text evidence="1">Upon interferon induction, ISGylated via host HERC5; this results in the impairment of NS1 interaction with RNA targets due to its inability to form homodimers and to interact with host EIF2AK2/PKR.</text>
</comment>
<comment type="similarity">
    <text evidence="1">Belongs to the influenza A viruses NS1 family.</text>
</comment>